<accession>Q04949</accession>
<accession>D6W0C6</accession>
<accession>Q03592</accession>
<gene>
    <name type="primary">DYN3</name>
    <name type="ordered locus">YMR299C</name>
    <name type="ORF">YM9952.01C</name>
</gene>
<comment type="function">
    <text evidence="3">Component of the cytoplasmic dynein which acts as a motor for the intracellular retrograde motility of vesicles and organelles along microtubules. May play an important role in the proper orientation of the mitotic spindle into the budding daughter cell yeast. Probably required for normal progression of the cell cycle.</text>
</comment>
<comment type="subunit">
    <text evidence="3">The dynein complex consists of at least two heavy chains and a number of intermediate and light chains. Interacts with DYN1.</text>
</comment>
<comment type="interaction">
    <interactant intactId="EBI-27644">
        <id>Q04949</id>
    </interactant>
    <interactant intactId="EBI-6230">
        <id>P36022</id>
        <label>DYN1</label>
    </interactant>
    <organismsDiffer>false</organismsDiffer>
    <experiments>2</experiments>
</comment>
<comment type="subcellular location">
    <subcellularLocation>
        <location evidence="1 3">Cytoplasm</location>
        <location evidence="1 3">Cytoskeleton</location>
    </subcellularLocation>
    <text>Concentrates at motile dots in the cytoplasm corresponding to the plus ends of cytoplasmic microtubules.</text>
</comment>
<comment type="miscellaneous">
    <text evidence="2">Present with 1170 molecules/cell in log phase SD medium.</text>
</comment>
<comment type="similarity">
    <text evidence="4">Belongs to the dynein light intermediate chain DYN3 family.</text>
</comment>
<keyword id="KW-0963">Cytoplasm</keyword>
<keyword id="KW-0206">Cytoskeleton</keyword>
<keyword id="KW-0243">Dynein</keyword>
<keyword id="KW-0493">Microtubule</keyword>
<keyword id="KW-0505">Motor protein</keyword>
<keyword id="KW-1185">Reference proteome</keyword>
<feature type="chain" id="PRO_0000203353" description="Cytoplasmic dynein intermediate light chain DYN3">
    <location>
        <begin position="1"/>
        <end position="312"/>
    </location>
</feature>
<proteinExistence type="evidence at protein level"/>
<protein>
    <recommendedName>
        <fullName>Cytoplasmic dynein intermediate light chain DYN3</fullName>
        <shortName>Dynein protein 3</shortName>
    </recommendedName>
</protein>
<organism>
    <name type="scientific">Saccharomyces cerevisiae (strain ATCC 204508 / S288c)</name>
    <name type="common">Baker's yeast</name>
    <dbReference type="NCBI Taxonomy" id="559292"/>
    <lineage>
        <taxon>Eukaryota</taxon>
        <taxon>Fungi</taxon>
        <taxon>Dikarya</taxon>
        <taxon>Ascomycota</taxon>
        <taxon>Saccharomycotina</taxon>
        <taxon>Saccharomycetes</taxon>
        <taxon>Saccharomycetales</taxon>
        <taxon>Saccharomycetaceae</taxon>
        <taxon>Saccharomyces</taxon>
    </lineage>
</organism>
<dbReference type="EMBL" id="X80836">
    <property type="protein sequence ID" value="CAA56808.1"/>
    <property type="molecule type" value="Genomic_DNA"/>
</dbReference>
<dbReference type="EMBL" id="Z49212">
    <property type="protein sequence ID" value="CAA89132.1"/>
    <property type="molecule type" value="Genomic_DNA"/>
</dbReference>
<dbReference type="EMBL" id="BK006946">
    <property type="protein sequence ID" value="DAA10200.2"/>
    <property type="molecule type" value="Genomic_DNA"/>
</dbReference>
<dbReference type="PIR" id="S53969">
    <property type="entry name" value="S53969"/>
</dbReference>
<dbReference type="RefSeq" id="NP_014028.2">
    <property type="nucleotide sequence ID" value="NM_001182808.2"/>
</dbReference>
<dbReference type="SMR" id="Q04949"/>
<dbReference type="BioGRID" id="35479">
    <property type="interactions" value="299"/>
</dbReference>
<dbReference type="ComplexPortal" id="CPX-1178">
    <property type="entry name" value="Cytoplasmic dynein complex"/>
</dbReference>
<dbReference type="DIP" id="DIP-7271N"/>
<dbReference type="FunCoup" id="Q04949">
    <property type="interactions" value="60"/>
</dbReference>
<dbReference type="IntAct" id="Q04949">
    <property type="interactions" value="16"/>
</dbReference>
<dbReference type="MINT" id="Q04949"/>
<dbReference type="STRING" id="4932.YMR299C"/>
<dbReference type="iPTMnet" id="Q04949"/>
<dbReference type="PaxDb" id="4932-YMR299C"/>
<dbReference type="PeptideAtlas" id="Q04949"/>
<dbReference type="EnsemblFungi" id="YMR299C_mRNA">
    <property type="protein sequence ID" value="YMR299C"/>
    <property type="gene ID" value="YMR299C"/>
</dbReference>
<dbReference type="GeneID" id="855345"/>
<dbReference type="KEGG" id="sce:YMR299C"/>
<dbReference type="AGR" id="SGD:S000004914"/>
<dbReference type="SGD" id="S000004914">
    <property type="gene designation" value="DYN3"/>
</dbReference>
<dbReference type="VEuPathDB" id="FungiDB:YMR299C"/>
<dbReference type="eggNOG" id="ENOG502S4QG">
    <property type="taxonomic scope" value="Eukaryota"/>
</dbReference>
<dbReference type="HOGENOM" id="CLU_064762_0_0_1"/>
<dbReference type="InParanoid" id="Q04949"/>
<dbReference type="OMA" id="QIRWIFL"/>
<dbReference type="OrthoDB" id="27603at2759"/>
<dbReference type="BioCyc" id="YEAST:G3O-32966-MONOMER"/>
<dbReference type="BioGRID-ORCS" id="855345">
    <property type="hits" value="0 hits in 10 CRISPR screens"/>
</dbReference>
<dbReference type="PRO" id="PR:Q04949"/>
<dbReference type="Proteomes" id="UP000002311">
    <property type="component" value="Chromosome XIII"/>
</dbReference>
<dbReference type="RNAct" id="Q04949">
    <property type="molecule type" value="protein"/>
</dbReference>
<dbReference type="GO" id="GO:0005737">
    <property type="term" value="C:cytoplasm"/>
    <property type="evidence" value="ECO:0000303"/>
    <property type="project" value="ComplexPortal"/>
</dbReference>
<dbReference type="GO" id="GO:0005868">
    <property type="term" value="C:cytoplasmic dynein complex"/>
    <property type="evidence" value="ECO:0000353"/>
    <property type="project" value="SGD"/>
</dbReference>
<dbReference type="GO" id="GO:0005881">
    <property type="term" value="C:cytoplasmic microtubule"/>
    <property type="evidence" value="ECO:0000314"/>
    <property type="project" value="SGD"/>
</dbReference>
<dbReference type="GO" id="GO:0040001">
    <property type="term" value="P:establishment of mitotic spindle localization"/>
    <property type="evidence" value="ECO:0000303"/>
    <property type="project" value="ComplexPortal"/>
</dbReference>
<dbReference type="GO" id="GO:0000132">
    <property type="term" value="P:establishment of mitotic spindle orientation"/>
    <property type="evidence" value="ECO:0000303"/>
    <property type="project" value="ComplexPortal"/>
</dbReference>
<dbReference type="GO" id="GO:0030473">
    <property type="term" value="P:nuclear migration along microtubule"/>
    <property type="evidence" value="ECO:0000315"/>
    <property type="project" value="SGD"/>
</dbReference>
<dbReference type="InterPro" id="IPR022780">
    <property type="entry name" value="Dynein_light_int_chain"/>
</dbReference>
<dbReference type="Pfam" id="PF05783">
    <property type="entry name" value="DLIC"/>
    <property type="match status" value="1"/>
</dbReference>
<evidence type="ECO:0000269" key="1">
    <source>
    </source>
</evidence>
<evidence type="ECO:0000269" key="2">
    <source>
    </source>
</evidence>
<evidence type="ECO:0000269" key="3">
    <source>
    </source>
</evidence>
<evidence type="ECO:0000305" key="4"/>
<reference key="1">
    <citation type="journal article" date="1997" name="Nature">
        <title>The nucleotide sequence of Saccharomyces cerevisiae chromosome XIII.</title>
        <authorList>
            <person name="Bowman S."/>
            <person name="Churcher C.M."/>
            <person name="Badcock K."/>
            <person name="Brown D."/>
            <person name="Chillingworth T."/>
            <person name="Connor R."/>
            <person name="Dedman K."/>
            <person name="Devlin K."/>
            <person name="Gentles S."/>
            <person name="Hamlin N."/>
            <person name="Hunt S."/>
            <person name="Jagels K."/>
            <person name="Lye G."/>
            <person name="Moule S."/>
            <person name="Odell C."/>
            <person name="Pearson D."/>
            <person name="Rajandream M.A."/>
            <person name="Rice P."/>
            <person name="Skelton J."/>
            <person name="Walsh S.V."/>
            <person name="Whitehead S."/>
            <person name="Barrell B.G."/>
        </authorList>
    </citation>
    <scope>NUCLEOTIDE SEQUENCE [LARGE SCALE GENOMIC DNA]</scope>
    <source>
        <strain>ATCC 204508 / S288c</strain>
    </source>
</reference>
<reference key="2">
    <citation type="journal article" date="2014" name="G3 (Bethesda)">
        <title>The reference genome sequence of Saccharomyces cerevisiae: Then and now.</title>
        <authorList>
            <person name="Engel S.R."/>
            <person name="Dietrich F.S."/>
            <person name="Fisk D.G."/>
            <person name="Binkley G."/>
            <person name="Balakrishnan R."/>
            <person name="Costanzo M.C."/>
            <person name="Dwight S.S."/>
            <person name="Hitz B.C."/>
            <person name="Karra K."/>
            <person name="Nash R.S."/>
            <person name="Weng S."/>
            <person name="Wong E.D."/>
            <person name="Lloyd P."/>
            <person name="Skrzypek M.S."/>
            <person name="Miyasato S.R."/>
            <person name="Simison M."/>
            <person name="Cherry J.M."/>
        </authorList>
    </citation>
    <scope>GENOME REANNOTATION</scope>
    <source>
        <strain>ATCC 204508 / S288c</strain>
    </source>
</reference>
<reference key="3">
    <citation type="journal article" date="2003" name="Nature">
        <title>Global analysis of protein localization in budding yeast.</title>
        <authorList>
            <person name="Huh W.-K."/>
            <person name="Falvo J.V."/>
            <person name="Gerke L.C."/>
            <person name="Carroll A.S."/>
            <person name="Howson R.W."/>
            <person name="Weissman J.S."/>
            <person name="O'Shea E.K."/>
        </authorList>
    </citation>
    <scope>SUBCELLULAR LOCATION [LARGE SCALE ANALYSIS]</scope>
</reference>
<reference key="4">
    <citation type="journal article" date="2003" name="Nature">
        <title>Global analysis of protein expression in yeast.</title>
        <authorList>
            <person name="Ghaemmaghami S."/>
            <person name="Huh W.-K."/>
            <person name="Bower K."/>
            <person name="Howson R.W."/>
            <person name="Belle A."/>
            <person name="Dephoure N."/>
            <person name="O'Shea E.K."/>
            <person name="Weissman J.S."/>
        </authorList>
    </citation>
    <scope>LEVEL OF PROTEIN EXPRESSION [LARGE SCALE ANALYSIS]</scope>
</reference>
<reference key="5">
    <citation type="journal article" date="2005" name="J. Cell Biol.">
        <title>The offloading model for dynein function: differential function of motor subunits.</title>
        <authorList>
            <person name="Lee W.-L."/>
            <person name="Kaiser M.A."/>
            <person name="Cooper J.A."/>
        </authorList>
    </citation>
    <scope>FUNCTION</scope>
    <scope>SUBCELLULAR LOCATION</scope>
    <scope>INTERACTION WITH DYN1</scope>
</reference>
<reference key="6">
    <citation type="journal article" date="2009" name="Science">
        <title>Global analysis of Cdk1 substrate phosphorylation sites provides insights into evolution.</title>
        <authorList>
            <person name="Holt L.J."/>
            <person name="Tuch B.B."/>
            <person name="Villen J."/>
            <person name="Johnson A.D."/>
            <person name="Gygi S.P."/>
            <person name="Morgan D.O."/>
        </authorList>
    </citation>
    <scope>IDENTIFICATION BY MASS SPECTROMETRY [LARGE SCALE ANALYSIS]</scope>
</reference>
<sequence length="312" mass="36825">MDNCNAWDKLLSQNESTINSTETATITAIIYSPSSKTLHQFINICFPEGSNSILDTTLINYATIGWTNDLKENYSVDVYTLIRNTDDALDLLKPFLQEHSSKVRWLILLDWTLNDQKLWLNELSYAFNKIKQLNDDNEFSVWCLNSGEILNLQRHTTVWQSVHIDFILQTLRSFCYFNDSSLFYICEDHTEEKREEAQRLKYQELLKHFCEDRDMKDHIEMVKRSEILIPKGCDSIGLIKTVDERFEPTEVKEQHFLARYMDFIPTIDKIREDRKTTSGIDLDKLYPLEVFKVNIQEELGKMFAKYRENSRI</sequence>
<name>DYN3_YEAST</name>